<name>RS21B_RHIME</name>
<accession>Q92M03</accession>
<dbReference type="EMBL" id="AL591688">
    <property type="protein sequence ID" value="CAC47435.1"/>
    <property type="status" value="ALT_INIT"/>
    <property type="molecule type" value="Genomic_DNA"/>
</dbReference>
<dbReference type="RefSeq" id="NP_386962.3">
    <property type="nucleotide sequence ID" value="NC_003047.1"/>
</dbReference>
<dbReference type="SMR" id="Q92M03"/>
<dbReference type="EnsemblBacteria" id="CAC47435">
    <property type="protein sequence ID" value="CAC47435"/>
    <property type="gene ID" value="SMc03934"/>
</dbReference>
<dbReference type="KEGG" id="sme:SMc03934"/>
<dbReference type="PATRIC" id="fig|266834.11.peg.4376"/>
<dbReference type="eggNOG" id="COG0828">
    <property type="taxonomic scope" value="Bacteria"/>
</dbReference>
<dbReference type="HOGENOM" id="CLU_159258_0_1_5"/>
<dbReference type="OrthoDB" id="9811907at2"/>
<dbReference type="Proteomes" id="UP000001976">
    <property type="component" value="Chromosome"/>
</dbReference>
<dbReference type="GO" id="GO:1990904">
    <property type="term" value="C:ribonucleoprotein complex"/>
    <property type="evidence" value="ECO:0007669"/>
    <property type="project" value="UniProtKB-KW"/>
</dbReference>
<dbReference type="GO" id="GO:0005840">
    <property type="term" value="C:ribosome"/>
    <property type="evidence" value="ECO:0007669"/>
    <property type="project" value="UniProtKB-KW"/>
</dbReference>
<dbReference type="GO" id="GO:0003735">
    <property type="term" value="F:structural constituent of ribosome"/>
    <property type="evidence" value="ECO:0007669"/>
    <property type="project" value="InterPro"/>
</dbReference>
<dbReference type="GO" id="GO:0006412">
    <property type="term" value="P:translation"/>
    <property type="evidence" value="ECO:0007669"/>
    <property type="project" value="UniProtKB-UniRule"/>
</dbReference>
<dbReference type="Gene3D" id="1.20.5.1150">
    <property type="entry name" value="Ribosomal protein S8"/>
    <property type="match status" value="1"/>
</dbReference>
<dbReference type="HAMAP" id="MF_00358">
    <property type="entry name" value="Ribosomal_bS21"/>
    <property type="match status" value="1"/>
</dbReference>
<dbReference type="InterPro" id="IPR001911">
    <property type="entry name" value="Ribosomal_bS21"/>
</dbReference>
<dbReference type="InterPro" id="IPR018278">
    <property type="entry name" value="Ribosomal_bS21_CS"/>
</dbReference>
<dbReference type="InterPro" id="IPR038380">
    <property type="entry name" value="Ribosomal_bS21_sf"/>
</dbReference>
<dbReference type="NCBIfam" id="TIGR00030">
    <property type="entry name" value="S21p"/>
    <property type="match status" value="1"/>
</dbReference>
<dbReference type="PANTHER" id="PTHR21109">
    <property type="entry name" value="MITOCHONDRIAL 28S RIBOSOMAL PROTEIN S21"/>
    <property type="match status" value="1"/>
</dbReference>
<dbReference type="PANTHER" id="PTHR21109:SF0">
    <property type="entry name" value="SMALL RIBOSOMAL SUBUNIT PROTEIN BS21M"/>
    <property type="match status" value="1"/>
</dbReference>
<dbReference type="Pfam" id="PF01165">
    <property type="entry name" value="Ribosomal_S21"/>
    <property type="match status" value="1"/>
</dbReference>
<dbReference type="PRINTS" id="PR00976">
    <property type="entry name" value="RIBOSOMALS21"/>
</dbReference>
<dbReference type="PROSITE" id="PS01181">
    <property type="entry name" value="RIBOSOMAL_S21"/>
    <property type="match status" value="1"/>
</dbReference>
<gene>
    <name type="primary">rpsU2</name>
    <name type="ordered locus">R02856</name>
    <name type="ORF">SMc03934</name>
</gene>
<comment type="similarity">
    <text evidence="2">Belongs to the bacterial ribosomal protein bS21 family.</text>
</comment>
<comment type="sequence caution" evidence="2">
    <conflict type="erroneous initiation">
        <sequence resource="EMBL-CDS" id="CAC47435"/>
    </conflict>
    <text>Extended N-terminus.</text>
</comment>
<reference key="1">
    <citation type="journal article" date="2001" name="Proc. Natl. Acad. Sci. U.S.A.">
        <title>Analysis of the chromosome sequence of the legume symbiont Sinorhizobium meliloti strain 1021.</title>
        <authorList>
            <person name="Capela D."/>
            <person name="Barloy-Hubler F."/>
            <person name="Gouzy J."/>
            <person name="Bothe G."/>
            <person name="Ampe F."/>
            <person name="Batut J."/>
            <person name="Boistard P."/>
            <person name="Becker A."/>
            <person name="Boutry M."/>
            <person name="Cadieu E."/>
            <person name="Dreano S."/>
            <person name="Gloux S."/>
            <person name="Godrie T."/>
            <person name="Goffeau A."/>
            <person name="Kahn D."/>
            <person name="Kiss E."/>
            <person name="Lelaure V."/>
            <person name="Masuy D."/>
            <person name="Pohl T."/>
            <person name="Portetelle D."/>
            <person name="Puehler A."/>
            <person name="Purnelle B."/>
            <person name="Ramsperger U."/>
            <person name="Renard C."/>
            <person name="Thebault P."/>
            <person name="Vandenbol M."/>
            <person name="Weidner S."/>
            <person name="Galibert F."/>
        </authorList>
    </citation>
    <scope>NUCLEOTIDE SEQUENCE [LARGE SCALE GENOMIC DNA]</scope>
    <source>
        <strain>1021</strain>
    </source>
</reference>
<reference key="2">
    <citation type="journal article" date="2001" name="Science">
        <title>The composite genome of the legume symbiont Sinorhizobium meliloti.</title>
        <authorList>
            <person name="Galibert F."/>
            <person name="Finan T.M."/>
            <person name="Long S.R."/>
            <person name="Puehler A."/>
            <person name="Abola P."/>
            <person name="Ampe F."/>
            <person name="Barloy-Hubler F."/>
            <person name="Barnett M.J."/>
            <person name="Becker A."/>
            <person name="Boistard P."/>
            <person name="Bothe G."/>
            <person name="Boutry M."/>
            <person name="Bowser L."/>
            <person name="Buhrmester J."/>
            <person name="Cadieu E."/>
            <person name="Capela D."/>
            <person name="Chain P."/>
            <person name="Cowie A."/>
            <person name="Davis R.W."/>
            <person name="Dreano S."/>
            <person name="Federspiel N.A."/>
            <person name="Fisher R.F."/>
            <person name="Gloux S."/>
            <person name="Godrie T."/>
            <person name="Goffeau A."/>
            <person name="Golding B."/>
            <person name="Gouzy J."/>
            <person name="Gurjal M."/>
            <person name="Hernandez-Lucas I."/>
            <person name="Hong A."/>
            <person name="Huizar L."/>
            <person name="Hyman R.W."/>
            <person name="Jones T."/>
            <person name="Kahn D."/>
            <person name="Kahn M.L."/>
            <person name="Kalman S."/>
            <person name="Keating D.H."/>
            <person name="Kiss E."/>
            <person name="Komp C."/>
            <person name="Lelaure V."/>
            <person name="Masuy D."/>
            <person name="Palm C."/>
            <person name="Peck M.C."/>
            <person name="Pohl T.M."/>
            <person name="Portetelle D."/>
            <person name="Purnelle B."/>
            <person name="Ramsperger U."/>
            <person name="Surzycki R."/>
            <person name="Thebault P."/>
            <person name="Vandenbol M."/>
            <person name="Vorhoelter F.J."/>
            <person name="Weidner S."/>
            <person name="Wells D.H."/>
            <person name="Wong K."/>
            <person name="Yeh K.-C."/>
            <person name="Batut J."/>
        </authorList>
    </citation>
    <scope>NUCLEOTIDE SEQUENCE [LARGE SCALE GENOMIC DNA]</scope>
    <source>
        <strain>1021</strain>
    </source>
</reference>
<protein>
    <recommendedName>
        <fullName evidence="1">Small ribosomal subunit protein bS21B</fullName>
    </recommendedName>
    <alternativeName>
        <fullName evidence="2">30S ribosomal protein S21 2</fullName>
    </alternativeName>
</protein>
<proteinExistence type="inferred from homology"/>
<feature type="chain" id="PRO_0000178366" description="Small ribosomal subunit protein bS21B">
    <location>
        <begin position="1"/>
        <end position="70"/>
    </location>
</feature>
<keyword id="KW-1185">Reference proteome</keyword>
<keyword id="KW-0687">Ribonucleoprotein</keyword>
<keyword id="KW-0689">Ribosomal protein</keyword>
<organism>
    <name type="scientific">Rhizobium meliloti (strain 1021)</name>
    <name type="common">Ensifer meliloti</name>
    <name type="synonym">Sinorhizobium meliloti</name>
    <dbReference type="NCBI Taxonomy" id="266834"/>
    <lineage>
        <taxon>Bacteria</taxon>
        <taxon>Pseudomonadati</taxon>
        <taxon>Pseudomonadota</taxon>
        <taxon>Alphaproteobacteria</taxon>
        <taxon>Hyphomicrobiales</taxon>
        <taxon>Rhizobiaceae</taxon>
        <taxon>Sinorhizobium/Ensifer group</taxon>
        <taxon>Sinorhizobium</taxon>
    </lineage>
</organism>
<sequence length="70" mass="8470">MQVLVRDNNVDQALRALKKKMQREGIFREMKMRDFYEKPSQKRAREKAEAVRRVRKLARKRAQREGIVAR</sequence>
<evidence type="ECO:0000255" key="1">
    <source>
        <dbReference type="HAMAP-Rule" id="MF_00358"/>
    </source>
</evidence>
<evidence type="ECO:0000305" key="2"/>